<dbReference type="EC" id="3.1.-.-" evidence="1"/>
<dbReference type="EC" id="5.6.2.4" evidence="1"/>
<dbReference type="EMBL" id="CP000721">
    <property type="protein sequence ID" value="ABR32204.1"/>
    <property type="molecule type" value="Genomic_DNA"/>
</dbReference>
<dbReference type="RefSeq" id="WP_011967379.1">
    <property type="nucleotide sequence ID" value="NC_009617.1"/>
</dbReference>
<dbReference type="SMR" id="A6LPC4"/>
<dbReference type="KEGG" id="cbe:Cbei_0014"/>
<dbReference type="eggNOG" id="COG1074">
    <property type="taxonomic scope" value="Bacteria"/>
</dbReference>
<dbReference type="HOGENOM" id="CLU_001114_3_1_9"/>
<dbReference type="Proteomes" id="UP000000565">
    <property type="component" value="Chromosome"/>
</dbReference>
<dbReference type="GO" id="GO:0005829">
    <property type="term" value="C:cytosol"/>
    <property type="evidence" value="ECO:0007669"/>
    <property type="project" value="TreeGrafter"/>
</dbReference>
<dbReference type="GO" id="GO:0033202">
    <property type="term" value="C:DNA helicase complex"/>
    <property type="evidence" value="ECO:0007669"/>
    <property type="project" value="TreeGrafter"/>
</dbReference>
<dbReference type="GO" id="GO:0043138">
    <property type="term" value="F:3'-5' DNA helicase activity"/>
    <property type="evidence" value="ECO:0007669"/>
    <property type="project" value="UniProtKB-UniRule"/>
</dbReference>
<dbReference type="GO" id="GO:0008408">
    <property type="term" value="F:3'-5' exonuclease activity"/>
    <property type="evidence" value="ECO:0007669"/>
    <property type="project" value="UniProtKB-UniRule"/>
</dbReference>
<dbReference type="GO" id="GO:0005524">
    <property type="term" value="F:ATP binding"/>
    <property type="evidence" value="ECO:0007669"/>
    <property type="project" value="UniProtKB-UniRule"/>
</dbReference>
<dbReference type="GO" id="GO:0016887">
    <property type="term" value="F:ATP hydrolysis activity"/>
    <property type="evidence" value="ECO:0007669"/>
    <property type="project" value="RHEA"/>
</dbReference>
<dbReference type="GO" id="GO:0003690">
    <property type="term" value="F:double-stranded DNA binding"/>
    <property type="evidence" value="ECO:0007669"/>
    <property type="project" value="UniProtKB-UniRule"/>
</dbReference>
<dbReference type="GO" id="GO:0000724">
    <property type="term" value="P:double-strand break repair via homologous recombination"/>
    <property type="evidence" value="ECO:0007669"/>
    <property type="project" value="UniProtKB-UniRule"/>
</dbReference>
<dbReference type="CDD" id="cd17932">
    <property type="entry name" value="DEXQc_UvrD"/>
    <property type="match status" value="1"/>
</dbReference>
<dbReference type="FunFam" id="3.40.50.300:FF:001236">
    <property type="entry name" value="ATP-dependent helicase/nuclease subunit A"/>
    <property type="match status" value="1"/>
</dbReference>
<dbReference type="Gene3D" id="3.90.320.10">
    <property type="match status" value="1"/>
</dbReference>
<dbReference type="Gene3D" id="3.40.50.300">
    <property type="entry name" value="P-loop containing nucleotide triphosphate hydrolases"/>
    <property type="match status" value="4"/>
</dbReference>
<dbReference type="HAMAP" id="MF_01451">
    <property type="entry name" value="AddA"/>
    <property type="match status" value="1"/>
</dbReference>
<dbReference type="InterPro" id="IPR014152">
    <property type="entry name" value="AddA"/>
</dbReference>
<dbReference type="InterPro" id="IPR014017">
    <property type="entry name" value="DNA_helicase_UvrD-like_C"/>
</dbReference>
<dbReference type="InterPro" id="IPR000212">
    <property type="entry name" value="DNA_helicase_UvrD/REP"/>
</dbReference>
<dbReference type="InterPro" id="IPR027417">
    <property type="entry name" value="P-loop_NTPase"/>
</dbReference>
<dbReference type="InterPro" id="IPR011604">
    <property type="entry name" value="PDDEXK-like_dom_sf"/>
</dbReference>
<dbReference type="InterPro" id="IPR038726">
    <property type="entry name" value="PDDEXK_AddAB-type"/>
</dbReference>
<dbReference type="InterPro" id="IPR011335">
    <property type="entry name" value="Restrct_endonuc-II-like"/>
</dbReference>
<dbReference type="InterPro" id="IPR014016">
    <property type="entry name" value="UvrD-like_ATP-bd"/>
</dbReference>
<dbReference type="NCBIfam" id="TIGR02785">
    <property type="entry name" value="addA_Gpos"/>
    <property type="match status" value="1"/>
</dbReference>
<dbReference type="PANTHER" id="PTHR11070:SF48">
    <property type="entry name" value="ATP-DEPENDENT HELICASE_NUCLEASE SUBUNIT A"/>
    <property type="match status" value="1"/>
</dbReference>
<dbReference type="PANTHER" id="PTHR11070">
    <property type="entry name" value="UVRD / RECB / PCRA DNA HELICASE FAMILY MEMBER"/>
    <property type="match status" value="1"/>
</dbReference>
<dbReference type="Pfam" id="PF12705">
    <property type="entry name" value="PDDEXK_1"/>
    <property type="match status" value="1"/>
</dbReference>
<dbReference type="Pfam" id="PF00580">
    <property type="entry name" value="UvrD-helicase"/>
    <property type="match status" value="1"/>
</dbReference>
<dbReference type="Pfam" id="PF13361">
    <property type="entry name" value="UvrD_C"/>
    <property type="match status" value="1"/>
</dbReference>
<dbReference type="SUPFAM" id="SSF52540">
    <property type="entry name" value="P-loop containing nucleoside triphosphate hydrolases"/>
    <property type="match status" value="1"/>
</dbReference>
<dbReference type="SUPFAM" id="SSF52980">
    <property type="entry name" value="Restriction endonuclease-like"/>
    <property type="match status" value="1"/>
</dbReference>
<dbReference type="PROSITE" id="PS51198">
    <property type="entry name" value="UVRD_HELICASE_ATP_BIND"/>
    <property type="match status" value="1"/>
</dbReference>
<dbReference type="PROSITE" id="PS51217">
    <property type="entry name" value="UVRD_HELICASE_CTER"/>
    <property type="match status" value="1"/>
</dbReference>
<gene>
    <name evidence="1" type="primary">addA</name>
    <name type="ordered locus">Cbei_0014</name>
</gene>
<evidence type="ECO:0000255" key="1">
    <source>
        <dbReference type="HAMAP-Rule" id="MF_01451"/>
    </source>
</evidence>
<protein>
    <recommendedName>
        <fullName evidence="1">ATP-dependent helicase/nuclease subunit A</fullName>
        <ecNumber evidence="1">3.1.-.-</ecNumber>
        <ecNumber evidence="1">5.6.2.4</ecNumber>
    </recommendedName>
    <alternativeName>
        <fullName evidence="1">ATP-dependent helicase/nuclease AddA</fullName>
    </alternativeName>
    <alternativeName>
        <fullName evidence="1">DNA 3'-5' helicase AddA</fullName>
    </alternativeName>
</protein>
<sequence length="1245" mass="144478">MGNTKWTDEQLSAIETRNCNLLVAAAAGSGKTAVLVERIIRIITNEENPVDIDKLLVVTFTNAAAAEMRERIADAISKELENNPRSKNLQRQLTLLNRANITTMHSFCLDVIKNNYHRIDLDPSFRIGDQTEGILIKSEVIEELFEDKYEEEDIGFTNLVEIFSSYKNDNNLKNLVLDLYNFTMSGPWPEKWLINSAEAFNIKQLDELDRTNWVRVLAQSVKIELDGYVKMLEKAIEVTSKTDGLEPYMDNLLMELSYIKKAYESTDNGLEAMFNSLSSVQFSRLKSIKKDKVSDELSQNTVKKIRDDVKKGISELLNNAYSVNPQQMLRNIQGSYPYIKKLIELVLEFSARFSKRKRERNILDFNDLEHLCLKILSDYDDENNIIPSSIAMNFKEYFDEVLVDEYQDSNNVQETIINLVSRKNDDNPNVFMVGDVKQSIYRFRQAKPELFIEKYNTYDSSNGVNRKIQLYKNFRSRREIIDGVNYIFKEVMSEVVGELEYTDEEALNLGADFKENKFKDTIVGGPIEVNIIDKSHNETVVEDNEEQEEINNVILEGRIVAKRIKELMSKSEDEQIFKVLDKESGEYRPLKYRDIVILLRATKNWSEPLLDELSAEGIPVYADTGSGYFESIEIRTIISLLKVVDNPMQDIPVISVMRSPIMGFSAEEISDIRLVKKDNYFYENIKYISEEAYNSINESYSDVLIAKCKYFINSVDKWRNKSIYMAIDEFIWYLYMDTAYYGYVGAMPNGVLRQANLKILFQRARQFEKTSFKGLFNFINFINKLIKSSGDMGSAQVLGENEDVVRIMSIHKSKGLEFPVVFLCGLGKNFNLMDLNKSILYHDELGLGPDFIDIGKRFSIGTLAKESIKKKMKFETLSEEMRILYVACTRAKEKLIMTGTVGNLEKSAEKWLGSASLDYNRISPSEVLKGKSYLDWICMSLCQHRDGSVLSESFGTENLILKDDNSRWKVSFWNKGDLIDKTKTEVLEQGEGYELTIINNKPYDNYLYEEVDKILSYKYPFKASTTIKSNISVSDLKRRHAEEDYDTEQLYREKVKVVPKFLQEKKGLTPSEKGTAVHFVMKKIDFNRVSSTEEIKEQLHELFEKEFLLSEELKVINPTKILSFFRSDLGKKILDLNCRGEKIYREIPFYTEISSLEVDKTLDNIYKDEKIRLQGIIDCFFEYKGDIILIDYKTDYIMEGHEDEFKEKYRKQLDYYSDAIFKLTGKKVKYKYLYSFYLEKEIKII</sequence>
<feature type="chain" id="PRO_0000379248" description="ATP-dependent helicase/nuclease subunit A">
    <location>
        <begin position="1"/>
        <end position="1245"/>
    </location>
</feature>
<feature type="domain" description="UvrD-like helicase ATP-binding" evidence="1">
    <location>
        <begin position="4"/>
        <end position="477"/>
    </location>
</feature>
<feature type="domain" description="UvrD-like helicase C-terminal" evidence="1">
    <location>
        <begin position="517"/>
        <end position="815"/>
    </location>
</feature>
<feature type="binding site" evidence="1">
    <location>
        <begin position="25"/>
        <end position="32"/>
    </location>
    <ligand>
        <name>ATP</name>
        <dbReference type="ChEBI" id="CHEBI:30616"/>
    </ligand>
</feature>
<reference key="1">
    <citation type="submission" date="2007-06" db="EMBL/GenBank/DDBJ databases">
        <title>Complete sequence of Clostridium beijerinckii NCIMB 8052.</title>
        <authorList>
            <consortium name="US DOE Joint Genome Institute"/>
            <person name="Copeland A."/>
            <person name="Lucas S."/>
            <person name="Lapidus A."/>
            <person name="Barry K."/>
            <person name="Detter J.C."/>
            <person name="Glavina del Rio T."/>
            <person name="Hammon N."/>
            <person name="Israni S."/>
            <person name="Dalin E."/>
            <person name="Tice H."/>
            <person name="Pitluck S."/>
            <person name="Sims D."/>
            <person name="Brettin T."/>
            <person name="Bruce D."/>
            <person name="Tapia R."/>
            <person name="Brainard J."/>
            <person name="Schmutz J."/>
            <person name="Larimer F."/>
            <person name="Land M."/>
            <person name="Hauser L."/>
            <person name="Kyrpides N."/>
            <person name="Mikhailova N."/>
            <person name="Bennet G."/>
            <person name="Cann I."/>
            <person name="Chen J.-S."/>
            <person name="Contreras A.L."/>
            <person name="Jones D."/>
            <person name="Kashket E."/>
            <person name="Mitchell W."/>
            <person name="Stoddard S."/>
            <person name="Schwarz W."/>
            <person name="Qureshi N."/>
            <person name="Young M."/>
            <person name="Shi Z."/>
            <person name="Ezeji T."/>
            <person name="White B."/>
            <person name="Blaschek H."/>
            <person name="Richardson P."/>
        </authorList>
    </citation>
    <scope>NUCLEOTIDE SEQUENCE [LARGE SCALE GENOMIC DNA]</scope>
    <source>
        <strain>ATCC 51743 / NCIMB 8052</strain>
    </source>
</reference>
<name>ADDA_CLOB8</name>
<accession>A6LPC4</accession>
<organism>
    <name type="scientific">Clostridium beijerinckii (strain ATCC 51743 / NCIMB 8052)</name>
    <name type="common">Clostridium acetobutylicum</name>
    <dbReference type="NCBI Taxonomy" id="290402"/>
    <lineage>
        <taxon>Bacteria</taxon>
        <taxon>Bacillati</taxon>
        <taxon>Bacillota</taxon>
        <taxon>Clostridia</taxon>
        <taxon>Eubacteriales</taxon>
        <taxon>Clostridiaceae</taxon>
        <taxon>Clostridium</taxon>
    </lineage>
</organism>
<proteinExistence type="inferred from homology"/>
<comment type="function">
    <text evidence="1">The heterodimer acts as both an ATP-dependent DNA helicase and an ATP-dependent, dual-direction single-stranded exonuclease. Recognizes the chi site generating a DNA molecule suitable for the initiation of homologous recombination. The AddA nuclease domain is required for chi fragment generation; this subunit has the helicase and 3' -&gt; 5' nuclease activities.</text>
</comment>
<comment type="catalytic activity">
    <reaction evidence="1">
        <text>Couples ATP hydrolysis with the unwinding of duplex DNA by translocating in the 3'-5' direction.</text>
        <dbReference type="EC" id="5.6.2.4"/>
    </reaction>
</comment>
<comment type="catalytic activity">
    <reaction evidence="1">
        <text>ATP + H2O = ADP + phosphate + H(+)</text>
        <dbReference type="Rhea" id="RHEA:13065"/>
        <dbReference type="ChEBI" id="CHEBI:15377"/>
        <dbReference type="ChEBI" id="CHEBI:15378"/>
        <dbReference type="ChEBI" id="CHEBI:30616"/>
        <dbReference type="ChEBI" id="CHEBI:43474"/>
        <dbReference type="ChEBI" id="CHEBI:456216"/>
        <dbReference type="EC" id="5.6.2.4"/>
    </reaction>
</comment>
<comment type="cofactor">
    <cofactor evidence="1">
        <name>Mg(2+)</name>
        <dbReference type="ChEBI" id="CHEBI:18420"/>
    </cofactor>
</comment>
<comment type="subunit">
    <text evidence="1">Heterodimer of AddA and AddB/RexB.</text>
</comment>
<comment type="similarity">
    <text evidence="1">Belongs to the helicase family. AddA subfamily.</text>
</comment>
<keyword id="KW-0067">ATP-binding</keyword>
<keyword id="KW-0227">DNA damage</keyword>
<keyword id="KW-0234">DNA repair</keyword>
<keyword id="KW-0238">DNA-binding</keyword>
<keyword id="KW-0269">Exonuclease</keyword>
<keyword id="KW-0347">Helicase</keyword>
<keyword id="KW-0378">Hydrolase</keyword>
<keyword id="KW-0413">Isomerase</keyword>
<keyword id="KW-0540">Nuclease</keyword>
<keyword id="KW-0547">Nucleotide-binding</keyword>